<reference key="1">
    <citation type="journal article" date="2008" name="Environ. Microbiol.">
        <title>The complete genome sequence of Moorella thermoacetica (f. Clostridium thermoaceticum).</title>
        <authorList>
            <person name="Pierce E."/>
            <person name="Xie G."/>
            <person name="Barabote R.D."/>
            <person name="Saunders E."/>
            <person name="Han C.S."/>
            <person name="Detter J.C."/>
            <person name="Richardson P."/>
            <person name="Brettin T.S."/>
            <person name="Das A."/>
            <person name="Ljungdahl L.G."/>
            <person name="Ragsdale S.W."/>
        </authorList>
    </citation>
    <scope>NUCLEOTIDE SEQUENCE [LARGE SCALE GENOMIC DNA]</scope>
    <source>
        <strain>ATCC 39073 / JCM 9320</strain>
    </source>
</reference>
<comment type="function">
    <text evidence="1">Binds to the 23S rRNA.</text>
</comment>
<comment type="subunit">
    <text evidence="1">Part of the 50S ribosomal subunit.</text>
</comment>
<comment type="similarity">
    <text evidence="1">Belongs to the universal ribosomal protein uL15 family.</text>
</comment>
<name>RL15_MOOTA</name>
<proteinExistence type="inferred from homology"/>
<accession>Q2RFR6</accession>
<sequence length="146" mass="15675">MRLHELHPAPGSRPRATRVGRGIGSGLGKTSGRGHKGQKARSGGGVRRGFEGGQMPLTRRLPKRGFTNIFARKLVPINVGELERFEPETVVTPELLHDAGLVKQARDGVKILGDGELTKKLTVKVQAASRKAIEKIEAAGGKVEVM</sequence>
<feature type="chain" id="PRO_0000251529" description="Large ribosomal subunit protein uL15">
    <location>
        <begin position="1"/>
        <end position="146"/>
    </location>
</feature>
<feature type="region of interest" description="Disordered" evidence="2">
    <location>
        <begin position="1"/>
        <end position="58"/>
    </location>
</feature>
<feature type="compositionally biased region" description="Gly residues" evidence="2">
    <location>
        <begin position="21"/>
        <end position="31"/>
    </location>
</feature>
<evidence type="ECO:0000255" key="1">
    <source>
        <dbReference type="HAMAP-Rule" id="MF_01341"/>
    </source>
</evidence>
<evidence type="ECO:0000256" key="2">
    <source>
        <dbReference type="SAM" id="MobiDB-lite"/>
    </source>
</evidence>
<evidence type="ECO:0000305" key="3"/>
<protein>
    <recommendedName>
        <fullName evidence="1">Large ribosomal subunit protein uL15</fullName>
    </recommendedName>
    <alternativeName>
        <fullName evidence="3">50S ribosomal protein L15</fullName>
    </alternativeName>
</protein>
<dbReference type="EMBL" id="CP000232">
    <property type="protein sequence ID" value="ABC20723.1"/>
    <property type="molecule type" value="Genomic_DNA"/>
</dbReference>
<dbReference type="RefSeq" id="YP_431266.1">
    <property type="nucleotide sequence ID" value="NC_007644.1"/>
</dbReference>
<dbReference type="SMR" id="Q2RFR6"/>
<dbReference type="STRING" id="264732.Moth_2441"/>
<dbReference type="EnsemblBacteria" id="ABC20723">
    <property type="protein sequence ID" value="ABC20723"/>
    <property type="gene ID" value="Moth_2441"/>
</dbReference>
<dbReference type="KEGG" id="mta:Moth_2441"/>
<dbReference type="PATRIC" id="fig|264732.11.peg.2659"/>
<dbReference type="eggNOG" id="COG0200">
    <property type="taxonomic scope" value="Bacteria"/>
</dbReference>
<dbReference type="HOGENOM" id="CLU_055188_4_2_9"/>
<dbReference type="OrthoDB" id="9810293at2"/>
<dbReference type="GO" id="GO:0022625">
    <property type="term" value="C:cytosolic large ribosomal subunit"/>
    <property type="evidence" value="ECO:0007669"/>
    <property type="project" value="TreeGrafter"/>
</dbReference>
<dbReference type="GO" id="GO:0019843">
    <property type="term" value="F:rRNA binding"/>
    <property type="evidence" value="ECO:0007669"/>
    <property type="project" value="UniProtKB-UniRule"/>
</dbReference>
<dbReference type="GO" id="GO:0003735">
    <property type="term" value="F:structural constituent of ribosome"/>
    <property type="evidence" value="ECO:0007669"/>
    <property type="project" value="InterPro"/>
</dbReference>
<dbReference type="GO" id="GO:0006412">
    <property type="term" value="P:translation"/>
    <property type="evidence" value="ECO:0007669"/>
    <property type="project" value="UniProtKB-UniRule"/>
</dbReference>
<dbReference type="Gene3D" id="3.100.10.10">
    <property type="match status" value="1"/>
</dbReference>
<dbReference type="HAMAP" id="MF_01341">
    <property type="entry name" value="Ribosomal_uL15"/>
    <property type="match status" value="1"/>
</dbReference>
<dbReference type="InterPro" id="IPR030878">
    <property type="entry name" value="Ribosomal_uL15"/>
</dbReference>
<dbReference type="InterPro" id="IPR021131">
    <property type="entry name" value="Ribosomal_uL15/eL18"/>
</dbReference>
<dbReference type="InterPro" id="IPR036227">
    <property type="entry name" value="Ribosomal_uL15/eL18_sf"/>
</dbReference>
<dbReference type="InterPro" id="IPR005749">
    <property type="entry name" value="Ribosomal_uL15_bac-type"/>
</dbReference>
<dbReference type="InterPro" id="IPR001196">
    <property type="entry name" value="Ribosomal_uL15_CS"/>
</dbReference>
<dbReference type="NCBIfam" id="TIGR01071">
    <property type="entry name" value="rplO_bact"/>
    <property type="match status" value="1"/>
</dbReference>
<dbReference type="PANTHER" id="PTHR12934">
    <property type="entry name" value="50S RIBOSOMAL PROTEIN L15"/>
    <property type="match status" value="1"/>
</dbReference>
<dbReference type="PANTHER" id="PTHR12934:SF11">
    <property type="entry name" value="LARGE RIBOSOMAL SUBUNIT PROTEIN UL15M"/>
    <property type="match status" value="1"/>
</dbReference>
<dbReference type="Pfam" id="PF00828">
    <property type="entry name" value="Ribosomal_L27A"/>
    <property type="match status" value="1"/>
</dbReference>
<dbReference type="SUPFAM" id="SSF52080">
    <property type="entry name" value="Ribosomal proteins L15p and L18e"/>
    <property type="match status" value="1"/>
</dbReference>
<dbReference type="PROSITE" id="PS00475">
    <property type="entry name" value="RIBOSOMAL_L15"/>
    <property type="match status" value="1"/>
</dbReference>
<keyword id="KW-0687">Ribonucleoprotein</keyword>
<keyword id="KW-0689">Ribosomal protein</keyword>
<keyword id="KW-0694">RNA-binding</keyword>
<keyword id="KW-0699">rRNA-binding</keyword>
<gene>
    <name evidence="1" type="primary">rplO</name>
    <name type="ordered locus">Moth_2441</name>
</gene>
<organism>
    <name type="scientific">Moorella thermoacetica (strain ATCC 39073 / JCM 9320)</name>
    <dbReference type="NCBI Taxonomy" id="264732"/>
    <lineage>
        <taxon>Bacteria</taxon>
        <taxon>Bacillati</taxon>
        <taxon>Bacillota</taxon>
        <taxon>Clostridia</taxon>
        <taxon>Moorellales</taxon>
        <taxon>Moorellaceae</taxon>
        <taxon>Moorella</taxon>
    </lineage>
</organism>